<proteinExistence type="inferred from homology"/>
<evidence type="ECO:0000250" key="1"/>
<evidence type="ECO:0000255" key="2">
    <source>
        <dbReference type="PROSITE-ProRule" id="PRU00159"/>
    </source>
</evidence>
<evidence type="ECO:0000255" key="3">
    <source>
        <dbReference type="PROSITE-ProRule" id="PRU10027"/>
    </source>
</evidence>
<evidence type="ECO:0000305" key="4"/>
<organism>
    <name type="scientific">Cryptococcus neoformans var. neoformans serotype D (strain B-3501A)</name>
    <name type="common">Filobasidiella neoformans</name>
    <dbReference type="NCBI Taxonomy" id="283643"/>
    <lineage>
        <taxon>Eukaryota</taxon>
        <taxon>Fungi</taxon>
        <taxon>Dikarya</taxon>
        <taxon>Basidiomycota</taxon>
        <taxon>Agaricomycotina</taxon>
        <taxon>Tremellomycetes</taxon>
        <taxon>Tremellales</taxon>
        <taxon>Cryptococcaceae</taxon>
        <taxon>Cryptococcus</taxon>
        <taxon>Cryptococcus neoformans species complex</taxon>
    </lineage>
</organism>
<comment type="function">
    <text evidence="1">Responds to activation by environmental stress by phosphorylating downstream targets.</text>
</comment>
<comment type="catalytic activity">
    <reaction>
        <text>L-seryl-[protein] + ATP = O-phospho-L-seryl-[protein] + ADP + H(+)</text>
        <dbReference type="Rhea" id="RHEA:17989"/>
        <dbReference type="Rhea" id="RHEA-COMP:9863"/>
        <dbReference type="Rhea" id="RHEA-COMP:11604"/>
        <dbReference type="ChEBI" id="CHEBI:15378"/>
        <dbReference type="ChEBI" id="CHEBI:29999"/>
        <dbReference type="ChEBI" id="CHEBI:30616"/>
        <dbReference type="ChEBI" id="CHEBI:83421"/>
        <dbReference type="ChEBI" id="CHEBI:456216"/>
        <dbReference type="EC" id="2.7.11.24"/>
    </reaction>
</comment>
<comment type="catalytic activity">
    <reaction>
        <text>L-threonyl-[protein] + ATP = O-phospho-L-threonyl-[protein] + ADP + H(+)</text>
        <dbReference type="Rhea" id="RHEA:46608"/>
        <dbReference type="Rhea" id="RHEA-COMP:11060"/>
        <dbReference type="Rhea" id="RHEA-COMP:11605"/>
        <dbReference type="ChEBI" id="CHEBI:15378"/>
        <dbReference type="ChEBI" id="CHEBI:30013"/>
        <dbReference type="ChEBI" id="CHEBI:30616"/>
        <dbReference type="ChEBI" id="CHEBI:61977"/>
        <dbReference type="ChEBI" id="CHEBI:456216"/>
        <dbReference type="EC" id="2.7.11.24"/>
    </reaction>
</comment>
<comment type="cofactor">
    <cofactor evidence="1">
        <name>Mg(2+)</name>
        <dbReference type="ChEBI" id="CHEBI:18420"/>
    </cofactor>
</comment>
<comment type="activity regulation">
    <text evidence="1">Activated by tyrosine and threonine phosphorylation.</text>
</comment>
<comment type="domain">
    <text>The TXY motif contains the threonine and tyrosine residues whose phosphorylation activates the MAP kinases.</text>
</comment>
<comment type="PTM">
    <text evidence="1">Dually phosphorylated on Thr-181 and Tyr-183, which activates the enzyme.</text>
</comment>
<comment type="similarity">
    <text evidence="4">Belongs to the protein kinase superfamily. CMGC Ser/Thr protein kinase family. MAP kinase subfamily.</text>
</comment>
<protein>
    <recommendedName>
        <fullName>Mitogen-activated protein kinase CPK1</fullName>
        <ecNumber>2.7.11.24</ecNumber>
    </recommendedName>
    <alternativeName>
        <fullName>Stress-activated protein kinase CPK1</fullName>
    </alternativeName>
</protein>
<dbReference type="EC" id="2.7.11.24"/>
<dbReference type="EMBL" id="AAEY01000024">
    <property type="protein sequence ID" value="EAL20679.1"/>
    <property type="molecule type" value="Genomic_DNA"/>
</dbReference>
<dbReference type="RefSeq" id="XP_775326.1">
    <property type="nucleotide sequence ID" value="XM_770233.1"/>
</dbReference>
<dbReference type="SMR" id="P0CP67"/>
<dbReference type="EnsemblFungi" id="AAW43453">
    <property type="protein sequence ID" value="AAW43453"/>
    <property type="gene ID" value="CNE00520"/>
</dbReference>
<dbReference type="GeneID" id="4936042"/>
<dbReference type="KEGG" id="cnb:CNBE0440"/>
<dbReference type="VEuPathDB" id="FungiDB:CNBE0440"/>
<dbReference type="HOGENOM" id="CLU_000288_181_1_1"/>
<dbReference type="OrthoDB" id="303at5206"/>
<dbReference type="GO" id="GO:0005524">
    <property type="term" value="F:ATP binding"/>
    <property type="evidence" value="ECO:0007669"/>
    <property type="project" value="UniProtKB-KW"/>
</dbReference>
<dbReference type="GO" id="GO:0004707">
    <property type="term" value="F:MAP kinase activity"/>
    <property type="evidence" value="ECO:0007669"/>
    <property type="project" value="UniProtKB-EC"/>
</dbReference>
<dbReference type="GO" id="GO:0106310">
    <property type="term" value="F:protein serine kinase activity"/>
    <property type="evidence" value="ECO:0007669"/>
    <property type="project" value="RHEA"/>
</dbReference>
<dbReference type="CDD" id="cd07849">
    <property type="entry name" value="STKc_ERK1_2_like"/>
    <property type="match status" value="1"/>
</dbReference>
<dbReference type="FunFam" id="1.10.510.10:FF:000040">
    <property type="entry name" value="Mitogen-activated protein kinase"/>
    <property type="match status" value="1"/>
</dbReference>
<dbReference type="FunFam" id="3.30.200.20:FF:000073">
    <property type="entry name" value="Mitogen-activated protein kinase"/>
    <property type="match status" value="1"/>
</dbReference>
<dbReference type="Gene3D" id="3.30.200.20">
    <property type="entry name" value="Phosphorylase Kinase, domain 1"/>
    <property type="match status" value="1"/>
</dbReference>
<dbReference type="Gene3D" id="1.10.510.10">
    <property type="entry name" value="Transferase(Phosphotransferase) domain 1"/>
    <property type="match status" value="1"/>
</dbReference>
<dbReference type="InterPro" id="IPR011009">
    <property type="entry name" value="Kinase-like_dom_sf"/>
</dbReference>
<dbReference type="InterPro" id="IPR050117">
    <property type="entry name" value="MAP_kinase"/>
</dbReference>
<dbReference type="InterPro" id="IPR003527">
    <property type="entry name" value="MAP_kinase_CS"/>
</dbReference>
<dbReference type="InterPro" id="IPR000719">
    <property type="entry name" value="Prot_kinase_dom"/>
</dbReference>
<dbReference type="InterPro" id="IPR017441">
    <property type="entry name" value="Protein_kinase_ATP_BS"/>
</dbReference>
<dbReference type="InterPro" id="IPR008271">
    <property type="entry name" value="Ser/Thr_kinase_AS"/>
</dbReference>
<dbReference type="PANTHER" id="PTHR24055">
    <property type="entry name" value="MITOGEN-ACTIVATED PROTEIN KINASE"/>
    <property type="match status" value="1"/>
</dbReference>
<dbReference type="Pfam" id="PF00069">
    <property type="entry name" value="Pkinase"/>
    <property type="match status" value="1"/>
</dbReference>
<dbReference type="SMART" id="SM00220">
    <property type="entry name" value="S_TKc"/>
    <property type="match status" value="1"/>
</dbReference>
<dbReference type="SUPFAM" id="SSF56112">
    <property type="entry name" value="Protein kinase-like (PK-like)"/>
    <property type="match status" value="1"/>
</dbReference>
<dbReference type="PROSITE" id="PS01351">
    <property type="entry name" value="MAPK"/>
    <property type="match status" value="1"/>
</dbReference>
<dbReference type="PROSITE" id="PS00107">
    <property type="entry name" value="PROTEIN_KINASE_ATP"/>
    <property type="match status" value="1"/>
</dbReference>
<dbReference type="PROSITE" id="PS50011">
    <property type="entry name" value="PROTEIN_KINASE_DOM"/>
    <property type="match status" value="1"/>
</dbReference>
<dbReference type="PROSITE" id="PS00108">
    <property type="entry name" value="PROTEIN_KINASE_ST"/>
    <property type="match status" value="1"/>
</dbReference>
<keyword id="KW-0067">ATP-binding</keyword>
<keyword id="KW-0418">Kinase</keyword>
<keyword id="KW-0547">Nucleotide-binding</keyword>
<keyword id="KW-0597">Phosphoprotein</keyword>
<keyword id="KW-0723">Serine/threonine-protein kinase</keyword>
<keyword id="KW-0808">Transferase</keyword>
<gene>
    <name type="primary">CPK1</name>
    <name type="ordered locus">CNBE0440</name>
</gene>
<sequence length="366" mass="42120">MTIDQSQINFNVPSTYKLEEIVGEGAYGLVVAGTHLPSGTQVAIKRITPFDHTMFCQRTLREIKLLRHFHHENIISILDLIQPESYEVFNEVYLVQELMETDLHRVIRSQELSDDHCQYFVYQTLRGLKALHSADVLHRDLKPSNLLLNANCDLKICDFGLARSSAKPPPGTSDGGQGFMTEYVATRWYRAPEVMLSFQEYTKAIDLWSVGCILAEMINGKPLFPGRDYHHQLSLILQVLGTPTMDDFNEITSQRSKDYLRALEFTRRQDFSAICPKAKPAAVDLLKQTLTFSPSKRITVEEALMHSYVEAYHDPHDEPNAEPLKPGFFDFEFHQEKLSRDQWKRMIYDEVQDPVPTILSQWTESH</sequence>
<feature type="chain" id="PRO_0000410192" description="Mitogen-activated protein kinase CPK1">
    <location>
        <begin position="1"/>
        <end position="366"/>
    </location>
</feature>
<feature type="domain" description="Protein kinase" evidence="2">
    <location>
        <begin position="17"/>
        <end position="302"/>
    </location>
</feature>
<feature type="short sequence motif" description="TXY">
    <location>
        <begin position="181"/>
        <end position="183"/>
    </location>
</feature>
<feature type="active site" description="Proton acceptor" evidence="2 3">
    <location>
        <position position="140"/>
    </location>
</feature>
<feature type="binding site" evidence="2">
    <location>
        <begin position="22"/>
        <end position="30"/>
    </location>
    <ligand>
        <name>ATP</name>
        <dbReference type="ChEBI" id="CHEBI:30616"/>
    </ligand>
</feature>
<feature type="binding site" evidence="2">
    <location>
        <position position="45"/>
    </location>
    <ligand>
        <name>ATP</name>
        <dbReference type="ChEBI" id="CHEBI:30616"/>
    </ligand>
</feature>
<feature type="modified residue" description="Phosphothreonine" evidence="1">
    <location>
        <position position="181"/>
    </location>
</feature>
<feature type="modified residue" description="Phosphotyrosine" evidence="1">
    <location>
        <position position="183"/>
    </location>
</feature>
<accession>P0CP67</accession>
<accession>Q55SZ2</accession>
<accession>Q5KHC4</accession>
<accession>Q8NK05</accession>
<name>CPK1_CRYNB</name>
<reference key="1">
    <citation type="journal article" date="2005" name="Science">
        <title>The genome of the basidiomycetous yeast and human pathogen Cryptococcus neoformans.</title>
        <authorList>
            <person name="Loftus B.J."/>
            <person name="Fung E."/>
            <person name="Roncaglia P."/>
            <person name="Rowley D."/>
            <person name="Amedeo P."/>
            <person name="Bruno D."/>
            <person name="Vamathevan J."/>
            <person name="Miranda M."/>
            <person name="Anderson I.J."/>
            <person name="Fraser J.A."/>
            <person name="Allen J.E."/>
            <person name="Bosdet I.E."/>
            <person name="Brent M.R."/>
            <person name="Chiu R."/>
            <person name="Doering T.L."/>
            <person name="Donlin M.J."/>
            <person name="D'Souza C.A."/>
            <person name="Fox D.S."/>
            <person name="Grinberg V."/>
            <person name="Fu J."/>
            <person name="Fukushima M."/>
            <person name="Haas B.J."/>
            <person name="Huang J.C."/>
            <person name="Janbon G."/>
            <person name="Jones S.J.M."/>
            <person name="Koo H.L."/>
            <person name="Krzywinski M.I."/>
            <person name="Kwon-Chung K.J."/>
            <person name="Lengeler K.B."/>
            <person name="Maiti R."/>
            <person name="Marra M.A."/>
            <person name="Marra R.E."/>
            <person name="Mathewson C.A."/>
            <person name="Mitchell T.G."/>
            <person name="Pertea M."/>
            <person name="Riggs F.R."/>
            <person name="Salzberg S.L."/>
            <person name="Schein J.E."/>
            <person name="Shvartsbeyn A."/>
            <person name="Shin H."/>
            <person name="Shumway M."/>
            <person name="Specht C.A."/>
            <person name="Suh B.B."/>
            <person name="Tenney A."/>
            <person name="Utterback T.R."/>
            <person name="Wickes B.L."/>
            <person name="Wortman J.R."/>
            <person name="Wye N.H."/>
            <person name="Kronstad J.W."/>
            <person name="Lodge J.K."/>
            <person name="Heitman J."/>
            <person name="Davis R.W."/>
            <person name="Fraser C.M."/>
            <person name="Hyman R.W."/>
        </authorList>
    </citation>
    <scope>NUCLEOTIDE SEQUENCE [LARGE SCALE GENOMIC DNA]</scope>
    <source>
        <strain>B-3501A</strain>
    </source>
</reference>